<keyword id="KW-0010">Activator</keyword>
<keyword id="KW-0963">Cytoplasm</keyword>
<keyword id="KW-0238">DNA-binding</keyword>
<keyword id="KW-1185">Reference proteome</keyword>
<keyword id="KW-0677">Repeat</keyword>
<keyword id="KW-0684">Rhamnose metabolism</keyword>
<keyword id="KW-0804">Transcription</keyword>
<keyword id="KW-0805">Transcription regulation</keyword>
<reference key="1">
    <citation type="journal article" date="2004" name="Proc. Natl. Acad. Sci. U.S.A.">
        <title>Genome sequence of the enterobacterial phytopathogen Erwinia carotovora subsp. atroseptica and characterization of virulence factors.</title>
        <authorList>
            <person name="Bell K.S."/>
            <person name="Sebaihia M."/>
            <person name="Pritchard L."/>
            <person name="Holden M.T.G."/>
            <person name="Hyman L.J."/>
            <person name="Holeva M.C."/>
            <person name="Thomson N.R."/>
            <person name="Bentley S.D."/>
            <person name="Churcher L.J.C."/>
            <person name="Mungall K."/>
            <person name="Atkin R."/>
            <person name="Bason N."/>
            <person name="Brooks K."/>
            <person name="Chillingworth T."/>
            <person name="Clark K."/>
            <person name="Doggett J."/>
            <person name="Fraser A."/>
            <person name="Hance Z."/>
            <person name="Hauser H."/>
            <person name="Jagels K."/>
            <person name="Moule S."/>
            <person name="Norbertczak H."/>
            <person name="Ormond D."/>
            <person name="Price C."/>
            <person name="Quail M.A."/>
            <person name="Sanders M."/>
            <person name="Walker D."/>
            <person name="Whitehead S."/>
            <person name="Salmond G.P.C."/>
            <person name="Birch P.R.J."/>
            <person name="Parkhill J."/>
            <person name="Toth I.K."/>
        </authorList>
    </citation>
    <scope>NUCLEOTIDE SEQUENCE [LARGE SCALE GENOMIC DNA]</scope>
    <source>
        <strain>SCRI 1043 / ATCC BAA-672</strain>
    </source>
</reference>
<sequence>MTLLRGDDFFTSRAVTVAVEPRTPQTAFPEHYHDFWEIVLVEQGAGVHVFNDQPYALCSGSVFFVRDNDRHLFEDVEGLCLTNMLYRSPRGFRFLSDIAAFLPYGPNGEWQGQWQVNAAGMQQLKQSLNSLAGLAQSDAPEAIAASESLFLQILVQLRQHCFQTEGNGSERQGVQALLGWLQNNYSEEVNWGGLADQFSLPLRTLHRQLKQHTGMTPQRYLNRLRLLEARRRLQQSDDSITTIAHACGFSDSNHFSTQFRKAFSQAPKSLRHQAFSREE</sequence>
<feature type="chain" id="PRO_0000194566" description="HTH-type transcriptional activator RhaS">
    <location>
        <begin position="1"/>
        <end position="279"/>
    </location>
</feature>
<feature type="domain" description="HTH araC/xylS-type" evidence="1">
    <location>
        <begin position="175"/>
        <end position="273"/>
    </location>
</feature>
<feature type="DNA-binding region" description="H-T-H motif" evidence="1">
    <location>
        <begin position="192"/>
        <end position="213"/>
    </location>
</feature>
<feature type="DNA-binding region" description="H-T-H motif" evidence="1">
    <location>
        <begin position="240"/>
        <end position="263"/>
    </location>
</feature>
<feature type="site" description="Interaction with sigma-70" evidence="1">
    <location>
        <position position="251"/>
    </location>
</feature>
<proteinExistence type="inferred from homology"/>
<accession>Q6DA22</accession>
<organism>
    <name type="scientific">Pectobacterium atrosepticum (strain SCRI 1043 / ATCC BAA-672)</name>
    <name type="common">Erwinia carotovora subsp. atroseptica</name>
    <dbReference type="NCBI Taxonomy" id="218491"/>
    <lineage>
        <taxon>Bacteria</taxon>
        <taxon>Pseudomonadati</taxon>
        <taxon>Pseudomonadota</taxon>
        <taxon>Gammaproteobacteria</taxon>
        <taxon>Enterobacterales</taxon>
        <taxon>Pectobacteriaceae</taxon>
        <taxon>Pectobacterium</taxon>
    </lineage>
</organism>
<evidence type="ECO:0000255" key="1">
    <source>
        <dbReference type="HAMAP-Rule" id="MF_01534"/>
    </source>
</evidence>
<dbReference type="EMBL" id="BX950851">
    <property type="protein sequence ID" value="CAG73356.1"/>
    <property type="molecule type" value="Genomic_DNA"/>
</dbReference>
<dbReference type="RefSeq" id="WP_011092063.1">
    <property type="nucleotide sequence ID" value="NC_004547.2"/>
</dbReference>
<dbReference type="SMR" id="Q6DA22"/>
<dbReference type="STRING" id="218491.ECA0441"/>
<dbReference type="DNASU" id="2884603"/>
<dbReference type="GeneID" id="57207295"/>
<dbReference type="KEGG" id="eca:ECA0441"/>
<dbReference type="PATRIC" id="fig|218491.5.peg.446"/>
<dbReference type="eggNOG" id="COG1917">
    <property type="taxonomic scope" value="Bacteria"/>
</dbReference>
<dbReference type="eggNOG" id="COG2169">
    <property type="taxonomic scope" value="Bacteria"/>
</dbReference>
<dbReference type="HOGENOM" id="CLU_000445_88_5_6"/>
<dbReference type="OrthoDB" id="2547276at2"/>
<dbReference type="Proteomes" id="UP000007966">
    <property type="component" value="Chromosome"/>
</dbReference>
<dbReference type="GO" id="GO:0005737">
    <property type="term" value="C:cytoplasm"/>
    <property type="evidence" value="ECO:0007669"/>
    <property type="project" value="UniProtKB-SubCell"/>
</dbReference>
<dbReference type="GO" id="GO:0003700">
    <property type="term" value="F:DNA-binding transcription factor activity"/>
    <property type="evidence" value="ECO:0007669"/>
    <property type="project" value="UniProtKB-UniRule"/>
</dbReference>
<dbReference type="GO" id="GO:0043565">
    <property type="term" value="F:sequence-specific DNA binding"/>
    <property type="evidence" value="ECO:0007669"/>
    <property type="project" value="InterPro"/>
</dbReference>
<dbReference type="GO" id="GO:0045893">
    <property type="term" value="P:positive regulation of DNA-templated transcription"/>
    <property type="evidence" value="ECO:0007669"/>
    <property type="project" value="UniProtKB-UniRule"/>
</dbReference>
<dbReference type="GO" id="GO:0019299">
    <property type="term" value="P:rhamnose metabolic process"/>
    <property type="evidence" value="ECO:0007669"/>
    <property type="project" value="UniProtKB-UniRule"/>
</dbReference>
<dbReference type="CDD" id="cd06977">
    <property type="entry name" value="cupin_RhaR_RhaS-like_N"/>
    <property type="match status" value="1"/>
</dbReference>
<dbReference type="Gene3D" id="1.10.10.60">
    <property type="entry name" value="Homeodomain-like"/>
    <property type="match status" value="1"/>
</dbReference>
<dbReference type="Gene3D" id="2.60.120.10">
    <property type="entry name" value="Jelly Rolls"/>
    <property type="match status" value="1"/>
</dbReference>
<dbReference type="HAMAP" id="MF_01534">
    <property type="entry name" value="HTH_type_RhaS"/>
    <property type="match status" value="1"/>
</dbReference>
<dbReference type="InterPro" id="IPR003313">
    <property type="entry name" value="AraC-bd"/>
</dbReference>
<dbReference type="InterPro" id="IPR050204">
    <property type="entry name" value="AraC_XylS_family_regulators"/>
</dbReference>
<dbReference type="InterPro" id="IPR009057">
    <property type="entry name" value="Homeodomain-like_sf"/>
</dbReference>
<dbReference type="InterPro" id="IPR037923">
    <property type="entry name" value="HTH-like"/>
</dbReference>
<dbReference type="InterPro" id="IPR018060">
    <property type="entry name" value="HTH_AraC"/>
</dbReference>
<dbReference type="InterPro" id="IPR018062">
    <property type="entry name" value="HTH_AraC-typ_CS"/>
</dbReference>
<dbReference type="InterPro" id="IPR047220">
    <property type="entry name" value="RhaR_RhaS-like_N"/>
</dbReference>
<dbReference type="InterPro" id="IPR014710">
    <property type="entry name" value="RmlC-like_jellyroll"/>
</dbReference>
<dbReference type="InterPro" id="IPR020449">
    <property type="entry name" value="Tscrpt_reg_AraC-type_HTH"/>
</dbReference>
<dbReference type="InterPro" id="IPR023609">
    <property type="entry name" value="Tscrpt_reg_HTH_RhaS"/>
</dbReference>
<dbReference type="NCBIfam" id="NF010028">
    <property type="entry name" value="PRK13503.1"/>
    <property type="match status" value="1"/>
</dbReference>
<dbReference type="PANTHER" id="PTHR46796:SF13">
    <property type="entry name" value="HTH-TYPE TRANSCRIPTIONAL ACTIVATOR RHAS"/>
    <property type="match status" value="1"/>
</dbReference>
<dbReference type="PANTHER" id="PTHR46796">
    <property type="entry name" value="HTH-TYPE TRANSCRIPTIONAL ACTIVATOR RHAS-RELATED"/>
    <property type="match status" value="1"/>
</dbReference>
<dbReference type="Pfam" id="PF02311">
    <property type="entry name" value="AraC_binding"/>
    <property type="match status" value="1"/>
</dbReference>
<dbReference type="Pfam" id="PF12833">
    <property type="entry name" value="HTH_18"/>
    <property type="match status" value="1"/>
</dbReference>
<dbReference type="PRINTS" id="PR00032">
    <property type="entry name" value="HTHARAC"/>
</dbReference>
<dbReference type="SMART" id="SM00342">
    <property type="entry name" value="HTH_ARAC"/>
    <property type="match status" value="1"/>
</dbReference>
<dbReference type="SUPFAM" id="SSF46689">
    <property type="entry name" value="Homeodomain-like"/>
    <property type="match status" value="2"/>
</dbReference>
<dbReference type="SUPFAM" id="SSF51215">
    <property type="entry name" value="Regulatory protein AraC"/>
    <property type="match status" value="1"/>
</dbReference>
<dbReference type="PROSITE" id="PS00041">
    <property type="entry name" value="HTH_ARAC_FAMILY_1"/>
    <property type="match status" value="1"/>
</dbReference>
<dbReference type="PROSITE" id="PS01124">
    <property type="entry name" value="HTH_ARAC_FAMILY_2"/>
    <property type="match status" value="1"/>
</dbReference>
<protein>
    <recommendedName>
        <fullName evidence="1">HTH-type transcriptional activator RhaS</fullName>
    </recommendedName>
    <alternativeName>
        <fullName evidence="1">L-rhamnose operon regulatory protein RhaS</fullName>
    </alternativeName>
</protein>
<comment type="function">
    <text evidence="1">Activates expression of the rhaBAD and rhaT operons.</text>
</comment>
<comment type="subunit">
    <text evidence="1">Binds DNA as a dimer.</text>
</comment>
<comment type="subcellular location">
    <subcellularLocation>
        <location evidence="1">Cytoplasm</location>
    </subcellularLocation>
</comment>
<gene>
    <name evidence="1" type="primary">rhaS</name>
    <name type="ordered locus">ECA0441</name>
</gene>
<name>RHAS_PECAS</name>